<proteinExistence type="inferred from homology"/>
<reference key="1">
    <citation type="journal article" date="2001" name="J. Bacteriol.">
        <title>Potential symbiosis-specific genes uncovered by sequencing a 410-kb DNA region of the Bradyrhizobium japonicum chromosome.</title>
        <authorList>
            <person name="Goettfert M."/>
            <person name="Roethlisberger S."/>
            <person name="Kuendig C."/>
            <person name="Beck C."/>
            <person name="Marty R."/>
            <person name="Hennecke H."/>
        </authorList>
    </citation>
    <scope>NUCLEOTIDE SEQUENCE [GENOMIC DNA]</scope>
    <source>
        <strain>USDA 110spc4</strain>
    </source>
</reference>
<reference key="2">
    <citation type="journal article" date="2002" name="DNA Res.">
        <title>Complete genomic sequence of nitrogen-fixing symbiotic bacterium Bradyrhizobium japonicum USDA110.</title>
        <authorList>
            <person name="Kaneko T."/>
            <person name="Nakamura Y."/>
            <person name="Sato S."/>
            <person name="Minamisawa K."/>
            <person name="Uchiumi T."/>
            <person name="Sasamoto S."/>
            <person name="Watanabe A."/>
            <person name="Idesawa K."/>
            <person name="Iriguchi M."/>
            <person name="Kawashima K."/>
            <person name="Kohara M."/>
            <person name="Matsumoto M."/>
            <person name="Shimpo S."/>
            <person name="Tsuruoka H."/>
            <person name="Wada T."/>
            <person name="Yamada M."/>
            <person name="Tabata S."/>
        </authorList>
    </citation>
    <scope>NUCLEOTIDE SEQUENCE [LARGE SCALE GENOMIC DNA]</scope>
    <source>
        <strain>JCM 10833 / BCRC 13528 / IAM 13628 / NBRC 14792 / USDA 110</strain>
    </source>
</reference>
<accession>Q9ANR2</accession>
<protein>
    <recommendedName>
        <fullName evidence="1">C4-dicarboxylate transport protein 1</fullName>
    </recommendedName>
</protein>
<organism>
    <name type="scientific">Bradyrhizobium diazoefficiens (strain JCM 10833 / BCRC 13528 / IAM 13628 / NBRC 14792 / USDA 110)</name>
    <dbReference type="NCBI Taxonomy" id="224911"/>
    <lineage>
        <taxon>Bacteria</taxon>
        <taxon>Pseudomonadati</taxon>
        <taxon>Pseudomonadota</taxon>
        <taxon>Alphaproteobacteria</taxon>
        <taxon>Hyphomicrobiales</taxon>
        <taxon>Nitrobacteraceae</taxon>
        <taxon>Bradyrhizobium</taxon>
    </lineage>
</organism>
<name>DCTA1_BRADU</name>
<keyword id="KW-0997">Cell inner membrane</keyword>
<keyword id="KW-1003">Cell membrane</keyword>
<keyword id="KW-0472">Membrane</keyword>
<keyword id="KW-1185">Reference proteome</keyword>
<keyword id="KW-0769">Symport</keyword>
<keyword id="KW-0812">Transmembrane</keyword>
<keyword id="KW-1133">Transmembrane helix</keyword>
<keyword id="KW-0813">Transport</keyword>
<sequence length="438" mass="46179">MTTMATAAPVRASQAWYKILYVQVLIAILIGAMVGCLWPSVATNDWVKALGDGFIKLIKMVIAPIIFCTVTSGIAHIQDAKKVGCVGVKALFYFEIVSSFALLLGLAMGNLVRIGHGLAVKPDAAAVANYVKQAEASKTVDFILNIIPDSVVGAFARGDVLQVLLFAILFGFSLMALGKRGERLRGMIDDVAHAVFGVIAIVMKAAPIGAFGAMAFTVGKFGPAALGNLIGLIALFYVTAALFVVVVLGLIARLVGFSIFKFLIYIKDELLIVLGTSSSESALPQLMEKLERLGCSKPVVGLVVPTGYSFNLDGTNIYMTLATLFIAQALGVDLSFGQQLTILLVAMLTSKGASGVTGAGFITLAATLSVVNPALVPGMAIVFSIDKFMSEVRALTNIIGNGIAAVFVSWWESELDHVTLQTRLNKSTASTTIDTTST</sequence>
<dbReference type="EMBL" id="AH010242">
    <property type="protein sequence ID" value="AAG60701.1"/>
    <property type="molecule type" value="Genomic_DNA"/>
</dbReference>
<dbReference type="EMBL" id="BA000040">
    <property type="protein sequence ID" value="BAC46983.1"/>
    <property type="molecule type" value="Genomic_DNA"/>
</dbReference>
<dbReference type="RefSeq" id="NP_768358.1">
    <property type="nucleotide sequence ID" value="NC_004463.1"/>
</dbReference>
<dbReference type="RefSeq" id="WP_011084529.1">
    <property type="nucleotide sequence ID" value="NZ_CP011360.1"/>
</dbReference>
<dbReference type="SMR" id="Q9ANR2"/>
<dbReference type="STRING" id="224911.AAV28_05525"/>
<dbReference type="EnsemblBacteria" id="BAC46983">
    <property type="protein sequence ID" value="BAC46983"/>
    <property type="gene ID" value="BAC46983"/>
</dbReference>
<dbReference type="GeneID" id="92969994"/>
<dbReference type="KEGG" id="bja:bll1718"/>
<dbReference type="PATRIC" id="fig|224911.44.peg.1182"/>
<dbReference type="eggNOG" id="COG1301">
    <property type="taxonomic scope" value="Bacteria"/>
</dbReference>
<dbReference type="HOGENOM" id="CLU_019375_7_0_5"/>
<dbReference type="InParanoid" id="Q9ANR2"/>
<dbReference type="OrthoDB" id="9766690at2"/>
<dbReference type="PhylomeDB" id="Q9ANR2"/>
<dbReference type="Proteomes" id="UP000002526">
    <property type="component" value="Chromosome"/>
</dbReference>
<dbReference type="GO" id="GO:0005886">
    <property type="term" value="C:plasma membrane"/>
    <property type="evidence" value="ECO:0000318"/>
    <property type="project" value="GO_Central"/>
</dbReference>
<dbReference type="GO" id="GO:0015138">
    <property type="term" value="F:fumarate transmembrane transporter activity"/>
    <property type="evidence" value="ECO:0000318"/>
    <property type="project" value="GO_Central"/>
</dbReference>
<dbReference type="GO" id="GO:0015366">
    <property type="term" value="F:malate:proton symporter activity"/>
    <property type="evidence" value="ECO:0000318"/>
    <property type="project" value="GO_Central"/>
</dbReference>
<dbReference type="GO" id="GO:0015141">
    <property type="term" value="F:succinate transmembrane transporter activity"/>
    <property type="evidence" value="ECO:0000318"/>
    <property type="project" value="GO_Central"/>
</dbReference>
<dbReference type="GO" id="GO:0070778">
    <property type="term" value="P:L-aspartate transmembrane transport"/>
    <property type="evidence" value="ECO:0000318"/>
    <property type="project" value="GO_Central"/>
</dbReference>
<dbReference type="FunFam" id="1.10.3860.10:FF:000001">
    <property type="entry name" value="C4-dicarboxylate transport protein"/>
    <property type="match status" value="1"/>
</dbReference>
<dbReference type="Gene3D" id="1.10.3860.10">
    <property type="entry name" value="Sodium:dicarboxylate symporter"/>
    <property type="match status" value="1"/>
</dbReference>
<dbReference type="HAMAP" id="MF_01300">
    <property type="entry name" value="C4_dicarb_transport"/>
    <property type="match status" value="1"/>
</dbReference>
<dbReference type="InterPro" id="IPR023954">
    <property type="entry name" value="C4_dicarb_transport"/>
</dbReference>
<dbReference type="InterPro" id="IPR001991">
    <property type="entry name" value="Na-dicarboxylate_symporter"/>
</dbReference>
<dbReference type="InterPro" id="IPR018107">
    <property type="entry name" value="Na-dicarboxylate_symporter_CS"/>
</dbReference>
<dbReference type="InterPro" id="IPR036458">
    <property type="entry name" value="Na:dicarbo_symporter_sf"/>
</dbReference>
<dbReference type="NCBIfam" id="NF002461">
    <property type="entry name" value="PRK01663.1"/>
    <property type="match status" value="1"/>
</dbReference>
<dbReference type="PANTHER" id="PTHR42865:SF1">
    <property type="entry name" value="AEROBIC C4-DICARBOXYLATE TRANSPORT PROTEIN"/>
    <property type="match status" value="1"/>
</dbReference>
<dbReference type="PANTHER" id="PTHR42865">
    <property type="entry name" value="PROTON/GLUTAMATE-ASPARTATE SYMPORTER"/>
    <property type="match status" value="1"/>
</dbReference>
<dbReference type="Pfam" id="PF00375">
    <property type="entry name" value="SDF"/>
    <property type="match status" value="1"/>
</dbReference>
<dbReference type="PRINTS" id="PR00173">
    <property type="entry name" value="EDTRNSPORT"/>
</dbReference>
<dbReference type="SUPFAM" id="SSF118215">
    <property type="entry name" value="Proton glutamate symport protein"/>
    <property type="match status" value="1"/>
</dbReference>
<dbReference type="PROSITE" id="PS00714">
    <property type="entry name" value="NA_DICARBOXYL_SYMP_2"/>
    <property type="match status" value="1"/>
</dbReference>
<gene>
    <name evidence="1" type="primary">dctA1</name>
    <name type="synonym">dctA</name>
    <name type="ordered locus">bll1718</name>
</gene>
<evidence type="ECO:0000255" key="1">
    <source>
        <dbReference type="HAMAP-Rule" id="MF_01300"/>
    </source>
</evidence>
<feature type="chain" id="PRO_0000202091" description="C4-dicarboxylate transport protein 1">
    <location>
        <begin position="1"/>
        <end position="438"/>
    </location>
</feature>
<feature type="transmembrane region" description="Helical" evidence="1">
    <location>
        <begin position="20"/>
        <end position="42"/>
    </location>
</feature>
<feature type="transmembrane region" description="Helical" evidence="1">
    <location>
        <begin position="57"/>
        <end position="77"/>
    </location>
</feature>
<feature type="transmembrane region" description="Helical" evidence="1">
    <location>
        <begin position="90"/>
        <end position="112"/>
    </location>
</feature>
<feature type="transmembrane region" description="Helical" evidence="1">
    <location>
        <begin position="160"/>
        <end position="179"/>
    </location>
</feature>
<feature type="transmembrane region" description="Helical" evidence="1">
    <location>
        <begin position="192"/>
        <end position="214"/>
    </location>
</feature>
<feature type="transmembrane region" description="Helical" evidence="1">
    <location>
        <begin position="229"/>
        <end position="251"/>
    </location>
</feature>
<feature type="transmembrane region" description="Helical" evidence="1">
    <location>
        <begin position="324"/>
        <end position="346"/>
    </location>
</feature>
<feature type="transmembrane region" description="Helical" evidence="1">
    <location>
        <begin position="361"/>
        <end position="383"/>
    </location>
</feature>
<comment type="function">
    <text evidence="1">Responsible for the transport of dicarboxylates such as succinate, fumarate, and malate from the periplasm across the membrane.</text>
</comment>
<comment type="subcellular location">
    <subcellularLocation>
        <location evidence="1">Cell inner membrane</location>
        <topology evidence="1">Multi-pass membrane protein</topology>
    </subcellularLocation>
</comment>
<comment type="similarity">
    <text evidence="1">Belongs to the dicarboxylate/amino acid:cation symporter (DAACS) (TC 2.A.23) family.</text>
</comment>